<organism>
    <name type="scientific">Parvibaculum lavamentivorans (strain DS-1 / DSM 13023 / NCIMB 13966)</name>
    <dbReference type="NCBI Taxonomy" id="402881"/>
    <lineage>
        <taxon>Bacteria</taxon>
        <taxon>Pseudomonadati</taxon>
        <taxon>Pseudomonadota</taxon>
        <taxon>Alphaproteobacteria</taxon>
        <taxon>Hyphomicrobiales</taxon>
        <taxon>Parvibaculaceae</taxon>
        <taxon>Parvibaculum</taxon>
    </lineage>
</organism>
<dbReference type="EC" id="3.1.26.4" evidence="1"/>
<dbReference type="EMBL" id="CP000774">
    <property type="protein sequence ID" value="ABS62307.1"/>
    <property type="molecule type" value="Genomic_DNA"/>
</dbReference>
<dbReference type="RefSeq" id="WP_011995598.1">
    <property type="nucleotide sequence ID" value="NC_009719.1"/>
</dbReference>
<dbReference type="SMR" id="A7HQX4"/>
<dbReference type="STRING" id="402881.Plav_0684"/>
<dbReference type="KEGG" id="pla:Plav_0684"/>
<dbReference type="eggNOG" id="COG0328">
    <property type="taxonomic scope" value="Bacteria"/>
</dbReference>
<dbReference type="HOGENOM" id="CLU_030894_6_0_5"/>
<dbReference type="OrthoDB" id="7845843at2"/>
<dbReference type="Proteomes" id="UP000006377">
    <property type="component" value="Chromosome"/>
</dbReference>
<dbReference type="GO" id="GO:0005737">
    <property type="term" value="C:cytoplasm"/>
    <property type="evidence" value="ECO:0007669"/>
    <property type="project" value="UniProtKB-SubCell"/>
</dbReference>
<dbReference type="GO" id="GO:0000287">
    <property type="term" value="F:magnesium ion binding"/>
    <property type="evidence" value="ECO:0007669"/>
    <property type="project" value="UniProtKB-UniRule"/>
</dbReference>
<dbReference type="GO" id="GO:0003676">
    <property type="term" value="F:nucleic acid binding"/>
    <property type="evidence" value="ECO:0007669"/>
    <property type="project" value="InterPro"/>
</dbReference>
<dbReference type="GO" id="GO:0004523">
    <property type="term" value="F:RNA-DNA hybrid ribonuclease activity"/>
    <property type="evidence" value="ECO:0007669"/>
    <property type="project" value="UniProtKB-UniRule"/>
</dbReference>
<dbReference type="GO" id="GO:0043137">
    <property type="term" value="P:DNA replication, removal of RNA primer"/>
    <property type="evidence" value="ECO:0007669"/>
    <property type="project" value="TreeGrafter"/>
</dbReference>
<dbReference type="CDD" id="cd09278">
    <property type="entry name" value="RNase_HI_prokaryote_like"/>
    <property type="match status" value="1"/>
</dbReference>
<dbReference type="FunFam" id="3.30.420.10:FF:000089">
    <property type="entry name" value="Ribonuclease H"/>
    <property type="match status" value="1"/>
</dbReference>
<dbReference type="Gene3D" id="3.30.420.10">
    <property type="entry name" value="Ribonuclease H-like superfamily/Ribonuclease H"/>
    <property type="match status" value="1"/>
</dbReference>
<dbReference type="HAMAP" id="MF_00042">
    <property type="entry name" value="RNase_H"/>
    <property type="match status" value="1"/>
</dbReference>
<dbReference type="InterPro" id="IPR050092">
    <property type="entry name" value="RNase_H"/>
</dbReference>
<dbReference type="InterPro" id="IPR012337">
    <property type="entry name" value="RNaseH-like_sf"/>
</dbReference>
<dbReference type="InterPro" id="IPR002156">
    <property type="entry name" value="RNaseH_domain"/>
</dbReference>
<dbReference type="InterPro" id="IPR036397">
    <property type="entry name" value="RNaseH_sf"/>
</dbReference>
<dbReference type="InterPro" id="IPR022892">
    <property type="entry name" value="RNaseHI"/>
</dbReference>
<dbReference type="NCBIfam" id="NF001236">
    <property type="entry name" value="PRK00203.1"/>
    <property type="match status" value="1"/>
</dbReference>
<dbReference type="PANTHER" id="PTHR10642">
    <property type="entry name" value="RIBONUCLEASE H1"/>
    <property type="match status" value="1"/>
</dbReference>
<dbReference type="PANTHER" id="PTHR10642:SF26">
    <property type="entry name" value="RIBONUCLEASE H1"/>
    <property type="match status" value="1"/>
</dbReference>
<dbReference type="Pfam" id="PF00075">
    <property type="entry name" value="RNase_H"/>
    <property type="match status" value="1"/>
</dbReference>
<dbReference type="SUPFAM" id="SSF53098">
    <property type="entry name" value="Ribonuclease H-like"/>
    <property type="match status" value="1"/>
</dbReference>
<dbReference type="PROSITE" id="PS50879">
    <property type="entry name" value="RNASE_H_1"/>
    <property type="match status" value="1"/>
</dbReference>
<sequence length="150" mass="16817">MSGEDIVEIYTDGACSGNPGPGGWGVLMIYKDREKELCGGEQATTNNRMELMAAIQALEALKRDAHVRIHTDSNYVKDGITKWIHGWKKNGWKNAAKQPVKNAELWRRLEAAISTHQVSWHWVKGHSDHPENDRADALARQGMAPYLPSK</sequence>
<comment type="function">
    <text evidence="1">Endonuclease that specifically degrades the RNA of RNA-DNA hybrids.</text>
</comment>
<comment type="catalytic activity">
    <reaction evidence="1">
        <text>Endonucleolytic cleavage to 5'-phosphomonoester.</text>
        <dbReference type="EC" id="3.1.26.4"/>
    </reaction>
</comment>
<comment type="cofactor">
    <cofactor evidence="1">
        <name>Mg(2+)</name>
        <dbReference type="ChEBI" id="CHEBI:18420"/>
    </cofactor>
    <text evidence="1">Binds 1 Mg(2+) ion per subunit. May bind a second metal ion at a regulatory site, or after substrate binding.</text>
</comment>
<comment type="subunit">
    <text evidence="1">Monomer.</text>
</comment>
<comment type="subcellular location">
    <subcellularLocation>
        <location evidence="1">Cytoplasm</location>
    </subcellularLocation>
</comment>
<comment type="similarity">
    <text evidence="1">Belongs to the RNase H family.</text>
</comment>
<protein>
    <recommendedName>
        <fullName evidence="1">Ribonuclease H</fullName>
        <shortName evidence="1">RNase H</shortName>
        <ecNumber evidence="1">3.1.26.4</ecNumber>
    </recommendedName>
</protein>
<gene>
    <name evidence="1" type="primary">rnhA</name>
    <name type="ordered locus">Plav_0684</name>
</gene>
<evidence type="ECO:0000255" key="1">
    <source>
        <dbReference type="HAMAP-Rule" id="MF_00042"/>
    </source>
</evidence>
<evidence type="ECO:0000255" key="2">
    <source>
        <dbReference type="PROSITE-ProRule" id="PRU00408"/>
    </source>
</evidence>
<name>RNH_PARL1</name>
<accession>A7HQX4</accession>
<reference key="1">
    <citation type="journal article" date="2011" name="Stand. Genomic Sci.">
        <title>Complete genome sequence of Parvibaculum lavamentivorans type strain (DS-1(T)).</title>
        <authorList>
            <person name="Schleheck D."/>
            <person name="Weiss M."/>
            <person name="Pitluck S."/>
            <person name="Bruce D."/>
            <person name="Land M.L."/>
            <person name="Han S."/>
            <person name="Saunders E."/>
            <person name="Tapia R."/>
            <person name="Detter C."/>
            <person name="Brettin T."/>
            <person name="Han J."/>
            <person name="Woyke T."/>
            <person name="Goodwin L."/>
            <person name="Pennacchio L."/>
            <person name="Nolan M."/>
            <person name="Cook A.M."/>
            <person name="Kjelleberg S."/>
            <person name="Thomas T."/>
        </authorList>
    </citation>
    <scope>NUCLEOTIDE SEQUENCE [LARGE SCALE GENOMIC DNA]</scope>
    <source>
        <strain>DS-1 / DSM 13023 / NCIMB 13966</strain>
    </source>
</reference>
<keyword id="KW-0963">Cytoplasm</keyword>
<keyword id="KW-0255">Endonuclease</keyword>
<keyword id="KW-0378">Hydrolase</keyword>
<keyword id="KW-0460">Magnesium</keyword>
<keyword id="KW-0479">Metal-binding</keyword>
<keyword id="KW-0540">Nuclease</keyword>
<keyword id="KW-1185">Reference proteome</keyword>
<feature type="chain" id="PRO_0000332642" description="Ribonuclease H">
    <location>
        <begin position="1"/>
        <end position="150"/>
    </location>
</feature>
<feature type="domain" description="RNase H type-1" evidence="2">
    <location>
        <begin position="3"/>
        <end position="144"/>
    </location>
</feature>
<feature type="binding site" evidence="1">
    <location>
        <position position="12"/>
    </location>
    <ligand>
        <name>Mg(2+)</name>
        <dbReference type="ChEBI" id="CHEBI:18420"/>
        <label>1</label>
    </ligand>
</feature>
<feature type="binding site" evidence="1">
    <location>
        <position position="12"/>
    </location>
    <ligand>
        <name>Mg(2+)</name>
        <dbReference type="ChEBI" id="CHEBI:18420"/>
        <label>2</label>
    </ligand>
</feature>
<feature type="binding site" evidence="1">
    <location>
        <position position="50"/>
    </location>
    <ligand>
        <name>Mg(2+)</name>
        <dbReference type="ChEBI" id="CHEBI:18420"/>
        <label>1</label>
    </ligand>
</feature>
<feature type="binding site" evidence="1">
    <location>
        <position position="72"/>
    </location>
    <ligand>
        <name>Mg(2+)</name>
        <dbReference type="ChEBI" id="CHEBI:18420"/>
        <label>1</label>
    </ligand>
</feature>
<feature type="binding site" evidence="1">
    <location>
        <position position="136"/>
    </location>
    <ligand>
        <name>Mg(2+)</name>
        <dbReference type="ChEBI" id="CHEBI:18420"/>
        <label>2</label>
    </ligand>
</feature>
<proteinExistence type="inferred from homology"/>